<protein>
    <recommendedName>
        <fullName>Acid sphingomyelinase-like phosphodiesterase 3b</fullName>
        <shortName>ASM-like phosphodiesterase 3b</shortName>
        <ecNumber evidence="4">3.1.4.-</ecNumber>
    </recommendedName>
</protein>
<proteinExistence type="evidence at protein level"/>
<gene>
    <name type="primary">SMPDL3B</name>
    <name type="synonym">ASML3B</name>
    <name type="synonym">ASMLPD</name>
</gene>
<name>ASM3B_HUMAN</name>
<accession>Q92485</accession>
<accession>B7ZB35</accession>
<accession>Q5T0Z0</accession>
<accession>Q96CB7</accession>
<feature type="signal peptide" evidence="3">
    <location>
        <begin position="1"/>
        <end position="18"/>
    </location>
</feature>
<feature type="chain" id="PRO_0000002331" description="Acid sphingomyelinase-like phosphodiesterase 3b">
    <location>
        <begin position="19"/>
        <end position="455"/>
    </location>
</feature>
<feature type="binding site" evidence="2">
    <location>
        <position position="28"/>
    </location>
    <ligand>
        <name>Zn(2+)</name>
        <dbReference type="ChEBI" id="CHEBI:29105"/>
        <label>1</label>
    </ligand>
</feature>
<feature type="binding site" evidence="2">
    <location>
        <position position="30"/>
    </location>
    <ligand>
        <name>Zn(2+)</name>
        <dbReference type="ChEBI" id="CHEBI:29105"/>
        <label>1</label>
    </ligand>
</feature>
<feature type="binding site" evidence="2">
    <location>
        <position position="93"/>
    </location>
    <ligand>
        <name>Zn(2+)</name>
        <dbReference type="ChEBI" id="CHEBI:29105"/>
        <label>1</label>
    </ligand>
</feature>
<feature type="binding site" evidence="2">
    <location>
        <position position="93"/>
    </location>
    <ligand>
        <name>Zn(2+)</name>
        <dbReference type="ChEBI" id="CHEBI:29105"/>
        <label>2</label>
    </ligand>
</feature>
<feature type="binding site" evidence="2">
    <location>
        <position position="134"/>
    </location>
    <ligand>
        <name>Zn(2+)</name>
        <dbReference type="ChEBI" id="CHEBI:29105"/>
        <label>2</label>
    </ligand>
</feature>
<feature type="binding site" evidence="2">
    <location>
        <position position="236"/>
    </location>
    <ligand>
        <name>Zn(2+)</name>
        <dbReference type="ChEBI" id="CHEBI:29105"/>
        <label>2</label>
    </ligand>
</feature>
<feature type="binding site" evidence="2">
    <location>
        <position position="277"/>
    </location>
    <ligand>
        <name>Zn(2+)</name>
        <dbReference type="ChEBI" id="CHEBI:29105"/>
        <label>2</label>
    </ligand>
</feature>
<feature type="binding site" evidence="2">
    <location>
        <position position="279"/>
    </location>
    <ligand>
        <name>Zn(2+)</name>
        <dbReference type="ChEBI" id="CHEBI:29105"/>
        <label>1</label>
    </ligand>
</feature>
<feature type="glycosylation site" description="N-linked (GlcNAc...) asparagine" evidence="3">
    <location>
        <position position="72"/>
    </location>
</feature>
<feature type="glycosylation site" description="N-linked (GlcNAc...) asparagine" evidence="3">
    <location>
        <position position="164"/>
    </location>
</feature>
<feature type="glycosylation site" description="N-linked (GlcNAc...) asparagine" evidence="3">
    <location>
        <position position="343"/>
    </location>
</feature>
<feature type="disulfide bond" evidence="2">
    <location>
        <begin position="45"/>
        <end position="64"/>
    </location>
</feature>
<feature type="disulfide bond" evidence="2">
    <location>
        <begin position="405"/>
        <end position="409"/>
    </location>
</feature>
<feature type="disulfide bond" evidence="2">
    <location>
        <begin position="415"/>
        <end position="428"/>
    </location>
</feature>
<feature type="splice variant" id="VSP_013478" description="In isoform 2." evidence="5">
    <original>DMVTYFMNLSQANAQGTPRWELEYQLTEAYGVPDASAH</original>
    <variation>VRSPAEARGGGWEGLKCITTFPHSQLIHLPLTTEPQEG</variation>
    <location>
        <begin position="336"/>
        <end position="373"/>
    </location>
</feature>
<feature type="splice variant" id="VSP_013479" description="In isoform 2." evidence="5">
    <location>
        <begin position="374"/>
        <end position="455"/>
    </location>
</feature>
<feature type="sequence variant" id="VAR_048340" description="In dbSNP:rs34560878.">
    <original>R</original>
    <variation>H</variation>
    <location>
        <position position="381"/>
    </location>
</feature>
<feature type="mutagenesis site" description="Reduced phosphodiesterase activity." evidence="4">
    <original>H</original>
    <variation>A</variation>
    <location>
        <position position="135"/>
    </location>
</feature>
<feature type="sequence conflict" description="In Ref. 1; CAA69328." evidence="6" ref="1">
    <original>MH</original>
    <variation>ID</variation>
    <location>
        <begin position="375"/>
        <end position="376"/>
    </location>
</feature>
<feature type="sequence conflict" description="In Ref. 1; CAA69328." evidence="6" ref="1">
    <original>LVL</original>
    <variation>TRAVTCQAHHSSW</variation>
    <location>
        <begin position="453"/>
        <end position="455"/>
    </location>
</feature>
<sequence>MRLLAWLIFLANWGGARAEPGKFWHIADLHLDPDYKVSKDPFQVCPSAGSQPVPDAGPWGDYLCDSPWALINSSIYAMKEIEPEPDFILWTGDDTPHVPDEKLGEAAVLEIVERLTKLIREVFPDTKVYAALGNHDFHPKNQFPAGSNNIYNQIAELWKPWLSNESIALFKKGAFYCEKLPGPSGAGRIVVLNTNLYYTSNALTADMADPGQQFQWLEDVLTDASKAGDMVYIVGHVPPGFFEKTQNKAWFREGFNEKYLKVVRKHHRVIAGQFFGHHHTDSFRMLYDDAGVPISAMFITPGVTPWKTTLPGVVNGANNPAIRVFEYDRATLSLKDMVTYFMNLSQANAQGTPRWELEYQLTEAYGVPDASAHSMHTVLDRIAGDQSTLQRYYVYNSVSYSAGVCDEACSMQHVCAMRQVDIDAYTTCLYASGTTPVPQLPLLLMALLGLCTLVL</sequence>
<evidence type="ECO:0000250" key="1"/>
<evidence type="ECO:0000250" key="2">
    <source>
        <dbReference type="UniProtKB" id="P58242"/>
    </source>
</evidence>
<evidence type="ECO:0000255" key="3"/>
<evidence type="ECO:0000269" key="4">
    <source>
    </source>
</evidence>
<evidence type="ECO:0000303" key="5">
    <source>
    </source>
</evidence>
<evidence type="ECO:0000305" key="6"/>
<keyword id="KW-0025">Alternative splicing</keyword>
<keyword id="KW-1003">Cell membrane</keyword>
<keyword id="KW-1015">Disulfide bond</keyword>
<keyword id="KW-0325">Glycoprotein</keyword>
<keyword id="KW-0326">Glycosidase</keyword>
<keyword id="KW-0336">GPI-anchor</keyword>
<keyword id="KW-0378">Hydrolase</keyword>
<keyword id="KW-0391">Immunity</keyword>
<keyword id="KW-0395">Inflammatory response</keyword>
<keyword id="KW-0399">Innate immunity</keyword>
<keyword id="KW-0442">Lipid degradation</keyword>
<keyword id="KW-0443">Lipid metabolism</keyword>
<keyword id="KW-0449">Lipoprotein</keyword>
<keyword id="KW-0472">Membrane</keyword>
<keyword id="KW-0479">Metal-binding</keyword>
<keyword id="KW-1267">Proteomics identification</keyword>
<keyword id="KW-1185">Reference proteome</keyword>
<keyword id="KW-0964">Secreted</keyword>
<keyword id="KW-0732">Signal</keyword>
<keyword id="KW-0862">Zinc</keyword>
<reference key="1">
    <citation type="submission" date="1996-09" db="EMBL/GenBank/DDBJ databases">
        <title>Acid sphingomyelinase is a member of a multi-gene family and shares motifs with a large family of metallo-phosphoesterases.</title>
        <authorList>
            <person name="Hofmann K."/>
        </authorList>
    </citation>
    <scope>NUCLEOTIDE SEQUENCE [MRNA] (ISOFORM 1)</scope>
</reference>
<reference key="2">
    <citation type="journal article" date="2004" name="Nat. Genet.">
        <title>Complete sequencing and characterization of 21,243 full-length human cDNAs.</title>
        <authorList>
            <person name="Ota T."/>
            <person name="Suzuki Y."/>
            <person name="Nishikawa T."/>
            <person name="Otsuki T."/>
            <person name="Sugiyama T."/>
            <person name="Irie R."/>
            <person name="Wakamatsu A."/>
            <person name="Hayashi K."/>
            <person name="Sato H."/>
            <person name="Nagai K."/>
            <person name="Kimura K."/>
            <person name="Makita H."/>
            <person name="Sekine M."/>
            <person name="Obayashi M."/>
            <person name="Nishi T."/>
            <person name="Shibahara T."/>
            <person name="Tanaka T."/>
            <person name="Ishii S."/>
            <person name="Yamamoto J."/>
            <person name="Saito K."/>
            <person name="Kawai Y."/>
            <person name="Isono Y."/>
            <person name="Nakamura Y."/>
            <person name="Nagahari K."/>
            <person name="Murakami K."/>
            <person name="Yasuda T."/>
            <person name="Iwayanagi T."/>
            <person name="Wagatsuma M."/>
            <person name="Shiratori A."/>
            <person name="Sudo H."/>
            <person name="Hosoiri T."/>
            <person name="Kaku Y."/>
            <person name="Kodaira H."/>
            <person name="Kondo H."/>
            <person name="Sugawara M."/>
            <person name="Takahashi M."/>
            <person name="Kanda K."/>
            <person name="Yokoi T."/>
            <person name="Furuya T."/>
            <person name="Kikkawa E."/>
            <person name="Omura Y."/>
            <person name="Abe K."/>
            <person name="Kamihara K."/>
            <person name="Katsuta N."/>
            <person name="Sato K."/>
            <person name="Tanikawa M."/>
            <person name="Yamazaki M."/>
            <person name="Ninomiya K."/>
            <person name="Ishibashi T."/>
            <person name="Yamashita H."/>
            <person name="Murakawa K."/>
            <person name="Fujimori K."/>
            <person name="Tanai H."/>
            <person name="Kimata M."/>
            <person name="Watanabe M."/>
            <person name="Hiraoka S."/>
            <person name="Chiba Y."/>
            <person name="Ishida S."/>
            <person name="Ono Y."/>
            <person name="Takiguchi S."/>
            <person name="Watanabe S."/>
            <person name="Yosida M."/>
            <person name="Hotuta T."/>
            <person name="Kusano J."/>
            <person name="Kanehori K."/>
            <person name="Takahashi-Fujii A."/>
            <person name="Hara H."/>
            <person name="Tanase T.-O."/>
            <person name="Nomura Y."/>
            <person name="Togiya S."/>
            <person name="Komai F."/>
            <person name="Hara R."/>
            <person name="Takeuchi K."/>
            <person name="Arita M."/>
            <person name="Imose N."/>
            <person name="Musashino K."/>
            <person name="Yuuki H."/>
            <person name="Oshima A."/>
            <person name="Sasaki N."/>
            <person name="Aotsuka S."/>
            <person name="Yoshikawa Y."/>
            <person name="Matsunawa H."/>
            <person name="Ichihara T."/>
            <person name="Shiohata N."/>
            <person name="Sano S."/>
            <person name="Moriya S."/>
            <person name="Momiyama H."/>
            <person name="Satoh N."/>
            <person name="Takami S."/>
            <person name="Terashima Y."/>
            <person name="Suzuki O."/>
            <person name="Nakagawa S."/>
            <person name="Senoh A."/>
            <person name="Mizoguchi H."/>
            <person name="Goto Y."/>
            <person name="Shimizu F."/>
            <person name="Wakebe H."/>
            <person name="Hishigaki H."/>
            <person name="Watanabe T."/>
            <person name="Sugiyama A."/>
            <person name="Takemoto M."/>
            <person name="Kawakami B."/>
            <person name="Yamazaki M."/>
            <person name="Watanabe K."/>
            <person name="Kumagai A."/>
            <person name="Itakura S."/>
            <person name="Fukuzumi Y."/>
            <person name="Fujimori Y."/>
            <person name="Komiyama M."/>
            <person name="Tashiro H."/>
            <person name="Tanigami A."/>
            <person name="Fujiwara T."/>
            <person name="Ono T."/>
            <person name="Yamada K."/>
            <person name="Fujii Y."/>
            <person name="Ozaki K."/>
            <person name="Hirao M."/>
            <person name="Ohmori Y."/>
            <person name="Kawabata A."/>
            <person name="Hikiji T."/>
            <person name="Kobatake N."/>
            <person name="Inagaki H."/>
            <person name="Ikema Y."/>
            <person name="Okamoto S."/>
            <person name="Okitani R."/>
            <person name="Kawakami T."/>
            <person name="Noguchi S."/>
            <person name="Itoh T."/>
            <person name="Shigeta K."/>
            <person name="Senba T."/>
            <person name="Matsumura K."/>
            <person name="Nakajima Y."/>
            <person name="Mizuno T."/>
            <person name="Morinaga M."/>
            <person name="Sasaki M."/>
            <person name="Togashi T."/>
            <person name="Oyama M."/>
            <person name="Hata H."/>
            <person name="Watanabe M."/>
            <person name="Komatsu T."/>
            <person name="Mizushima-Sugano J."/>
            <person name="Satoh T."/>
            <person name="Shirai Y."/>
            <person name="Takahashi Y."/>
            <person name="Nakagawa K."/>
            <person name="Okumura K."/>
            <person name="Nagase T."/>
            <person name="Nomura N."/>
            <person name="Kikuchi H."/>
            <person name="Masuho Y."/>
            <person name="Yamashita R."/>
            <person name="Nakai K."/>
            <person name="Yada T."/>
            <person name="Nakamura Y."/>
            <person name="Ohara O."/>
            <person name="Isogai T."/>
            <person name="Sugano S."/>
        </authorList>
    </citation>
    <scope>NUCLEOTIDE SEQUENCE [LARGE SCALE MRNA] (ISOFORM 1)</scope>
    <source>
        <tissue>Trachea</tissue>
    </source>
</reference>
<reference key="3">
    <citation type="journal article" date="2006" name="Nature">
        <title>The DNA sequence and biological annotation of human chromosome 1.</title>
        <authorList>
            <person name="Gregory S.G."/>
            <person name="Barlow K.F."/>
            <person name="McLay K.E."/>
            <person name="Kaul R."/>
            <person name="Swarbreck D."/>
            <person name="Dunham A."/>
            <person name="Scott C.E."/>
            <person name="Howe K.L."/>
            <person name="Woodfine K."/>
            <person name="Spencer C.C.A."/>
            <person name="Jones M.C."/>
            <person name="Gillson C."/>
            <person name="Searle S."/>
            <person name="Zhou Y."/>
            <person name="Kokocinski F."/>
            <person name="McDonald L."/>
            <person name="Evans R."/>
            <person name="Phillips K."/>
            <person name="Atkinson A."/>
            <person name="Cooper R."/>
            <person name="Jones C."/>
            <person name="Hall R.E."/>
            <person name="Andrews T.D."/>
            <person name="Lloyd C."/>
            <person name="Ainscough R."/>
            <person name="Almeida J.P."/>
            <person name="Ambrose K.D."/>
            <person name="Anderson F."/>
            <person name="Andrew R.W."/>
            <person name="Ashwell R.I.S."/>
            <person name="Aubin K."/>
            <person name="Babbage A.K."/>
            <person name="Bagguley C.L."/>
            <person name="Bailey J."/>
            <person name="Beasley H."/>
            <person name="Bethel G."/>
            <person name="Bird C.P."/>
            <person name="Bray-Allen S."/>
            <person name="Brown J.Y."/>
            <person name="Brown A.J."/>
            <person name="Buckley D."/>
            <person name="Burton J."/>
            <person name="Bye J."/>
            <person name="Carder C."/>
            <person name="Chapman J.C."/>
            <person name="Clark S.Y."/>
            <person name="Clarke G."/>
            <person name="Clee C."/>
            <person name="Cobley V."/>
            <person name="Collier R.E."/>
            <person name="Corby N."/>
            <person name="Coville G.J."/>
            <person name="Davies J."/>
            <person name="Deadman R."/>
            <person name="Dunn M."/>
            <person name="Earthrowl M."/>
            <person name="Ellington A.G."/>
            <person name="Errington H."/>
            <person name="Frankish A."/>
            <person name="Frankland J."/>
            <person name="French L."/>
            <person name="Garner P."/>
            <person name="Garnett J."/>
            <person name="Gay L."/>
            <person name="Ghori M.R.J."/>
            <person name="Gibson R."/>
            <person name="Gilby L.M."/>
            <person name="Gillett W."/>
            <person name="Glithero R.J."/>
            <person name="Grafham D.V."/>
            <person name="Griffiths C."/>
            <person name="Griffiths-Jones S."/>
            <person name="Grocock R."/>
            <person name="Hammond S."/>
            <person name="Harrison E.S.I."/>
            <person name="Hart E."/>
            <person name="Haugen E."/>
            <person name="Heath P.D."/>
            <person name="Holmes S."/>
            <person name="Holt K."/>
            <person name="Howden P.J."/>
            <person name="Hunt A.R."/>
            <person name="Hunt S.E."/>
            <person name="Hunter G."/>
            <person name="Isherwood J."/>
            <person name="James R."/>
            <person name="Johnson C."/>
            <person name="Johnson D."/>
            <person name="Joy A."/>
            <person name="Kay M."/>
            <person name="Kershaw J.K."/>
            <person name="Kibukawa M."/>
            <person name="Kimberley A.M."/>
            <person name="King A."/>
            <person name="Knights A.J."/>
            <person name="Lad H."/>
            <person name="Laird G."/>
            <person name="Lawlor S."/>
            <person name="Leongamornlert D.A."/>
            <person name="Lloyd D.M."/>
            <person name="Loveland J."/>
            <person name="Lovell J."/>
            <person name="Lush M.J."/>
            <person name="Lyne R."/>
            <person name="Martin S."/>
            <person name="Mashreghi-Mohammadi M."/>
            <person name="Matthews L."/>
            <person name="Matthews N.S.W."/>
            <person name="McLaren S."/>
            <person name="Milne S."/>
            <person name="Mistry S."/>
            <person name="Moore M.J.F."/>
            <person name="Nickerson T."/>
            <person name="O'Dell C.N."/>
            <person name="Oliver K."/>
            <person name="Palmeiri A."/>
            <person name="Palmer S.A."/>
            <person name="Parker A."/>
            <person name="Patel D."/>
            <person name="Pearce A.V."/>
            <person name="Peck A.I."/>
            <person name="Pelan S."/>
            <person name="Phelps K."/>
            <person name="Phillimore B.J."/>
            <person name="Plumb R."/>
            <person name="Rajan J."/>
            <person name="Raymond C."/>
            <person name="Rouse G."/>
            <person name="Saenphimmachak C."/>
            <person name="Sehra H.K."/>
            <person name="Sheridan E."/>
            <person name="Shownkeen R."/>
            <person name="Sims S."/>
            <person name="Skuce C.D."/>
            <person name="Smith M."/>
            <person name="Steward C."/>
            <person name="Subramanian S."/>
            <person name="Sycamore N."/>
            <person name="Tracey A."/>
            <person name="Tromans A."/>
            <person name="Van Helmond Z."/>
            <person name="Wall M."/>
            <person name="Wallis J.M."/>
            <person name="White S."/>
            <person name="Whitehead S.L."/>
            <person name="Wilkinson J.E."/>
            <person name="Willey D.L."/>
            <person name="Williams H."/>
            <person name="Wilming L."/>
            <person name="Wray P.W."/>
            <person name="Wu Z."/>
            <person name="Coulson A."/>
            <person name="Vaudin M."/>
            <person name="Sulston J.E."/>
            <person name="Durbin R.M."/>
            <person name="Hubbard T."/>
            <person name="Wooster R."/>
            <person name="Dunham I."/>
            <person name="Carter N.P."/>
            <person name="McVean G."/>
            <person name="Ross M.T."/>
            <person name="Harrow J."/>
            <person name="Olson M.V."/>
            <person name="Beck S."/>
            <person name="Rogers J."/>
            <person name="Bentley D.R."/>
        </authorList>
    </citation>
    <scope>NUCLEOTIDE SEQUENCE [LARGE SCALE GENOMIC DNA]</scope>
</reference>
<reference key="4">
    <citation type="submission" date="2005-09" db="EMBL/GenBank/DDBJ databases">
        <authorList>
            <person name="Mural R.J."/>
            <person name="Istrail S."/>
            <person name="Sutton G.G."/>
            <person name="Florea L."/>
            <person name="Halpern A.L."/>
            <person name="Mobarry C.M."/>
            <person name="Lippert R."/>
            <person name="Walenz B."/>
            <person name="Shatkay H."/>
            <person name="Dew I."/>
            <person name="Miller J.R."/>
            <person name="Flanigan M.J."/>
            <person name="Edwards N.J."/>
            <person name="Bolanos R."/>
            <person name="Fasulo D."/>
            <person name="Halldorsson B.V."/>
            <person name="Hannenhalli S."/>
            <person name="Turner R."/>
            <person name="Yooseph S."/>
            <person name="Lu F."/>
            <person name="Nusskern D.R."/>
            <person name="Shue B.C."/>
            <person name="Zheng X.H."/>
            <person name="Zhong F."/>
            <person name="Delcher A.L."/>
            <person name="Huson D.H."/>
            <person name="Kravitz S.A."/>
            <person name="Mouchard L."/>
            <person name="Reinert K."/>
            <person name="Remington K.A."/>
            <person name="Clark A.G."/>
            <person name="Waterman M.S."/>
            <person name="Eichler E.E."/>
            <person name="Adams M.D."/>
            <person name="Hunkapiller M.W."/>
            <person name="Myers E.W."/>
            <person name="Venter J.C."/>
        </authorList>
    </citation>
    <scope>NUCLEOTIDE SEQUENCE [LARGE SCALE GENOMIC DNA]</scope>
</reference>
<reference key="5">
    <citation type="journal article" date="2004" name="Genome Res.">
        <title>The status, quality, and expansion of the NIH full-length cDNA project: the Mammalian Gene Collection (MGC).</title>
        <authorList>
            <consortium name="The MGC Project Team"/>
        </authorList>
    </citation>
    <scope>NUCLEOTIDE SEQUENCE [LARGE SCALE MRNA] (ISOFORM 2)</scope>
    <source>
        <tissue>Colon</tissue>
    </source>
</reference>
<reference key="6">
    <citation type="journal article" date="2015" name="Cell Rep.">
        <title>The lipid-modifying enzyme SMPDL3B negatively regulates innate immunity.</title>
        <authorList>
            <person name="Heinz L.X."/>
            <person name="Baumann C.L."/>
            <person name="Koeberlin M.S."/>
            <person name="Snijder B."/>
            <person name="Gawish R."/>
            <person name="Shui G."/>
            <person name="Sharif O."/>
            <person name="Aspalter I.M."/>
            <person name="Mueller A.C."/>
            <person name="Kandasamy R.K."/>
            <person name="Breitwieser F.P."/>
            <person name="Pichlmair A."/>
            <person name="Bruckner M."/>
            <person name="Rebsamen M."/>
            <person name="Blueml S."/>
            <person name="Karonitsch T."/>
            <person name="Fauster A."/>
            <person name="Colinge J."/>
            <person name="Bennett K.L."/>
            <person name="Knapp S."/>
            <person name="Wenk M.R."/>
            <person name="Superti-Furga G."/>
        </authorList>
    </citation>
    <scope>PHOSPHODIESTERASE ACTIVITY</scope>
    <scope>MUTAGENESIS OF HIS-135</scope>
    <scope>GLYCOSYLATION</scope>
    <scope>CATALYTIC ACTIVITY</scope>
</reference>
<dbReference type="EC" id="3.1.4.-" evidence="4"/>
<dbReference type="EMBL" id="Y08134">
    <property type="protein sequence ID" value="CAA69328.1"/>
    <property type="molecule type" value="mRNA"/>
</dbReference>
<dbReference type="EMBL" id="AK316500">
    <property type="protein sequence ID" value="BAH14871.1"/>
    <property type="molecule type" value="mRNA"/>
</dbReference>
<dbReference type="EMBL" id="AL512288">
    <property type="status" value="NOT_ANNOTATED_CDS"/>
    <property type="molecule type" value="Genomic_DNA"/>
</dbReference>
<dbReference type="EMBL" id="CH471059">
    <property type="protein sequence ID" value="EAX07721.1"/>
    <property type="molecule type" value="Genomic_DNA"/>
</dbReference>
<dbReference type="EMBL" id="BC014444">
    <property type="protein sequence ID" value="AAH14444.1"/>
    <property type="molecule type" value="mRNA"/>
</dbReference>
<dbReference type="CCDS" id="CCDS30655.1">
    <molecule id="Q92485-1"/>
</dbReference>
<dbReference type="CCDS" id="CCDS30656.1">
    <molecule id="Q92485-2"/>
</dbReference>
<dbReference type="RefSeq" id="NP_001009568.1">
    <molecule id="Q92485-2"/>
    <property type="nucleotide sequence ID" value="NM_001009568.3"/>
</dbReference>
<dbReference type="RefSeq" id="NP_055289.2">
    <molecule id="Q92485-1"/>
    <property type="nucleotide sequence ID" value="NM_014474.4"/>
</dbReference>
<dbReference type="SMR" id="Q92485"/>
<dbReference type="BioGRID" id="118117">
    <property type="interactions" value="86"/>
</dbReference>
<dbReference type="FunCoup" id="Q92485">
    <property type="interactions" value="281"/>
</dbReference>
<dbReference type="IntAct" id="Q92485">
    <property type="interactions" value="27"/>
</dbReference>
<dbReference type="MINT" id="Q92485"/>
<dbReference type="STRING" id="9606.ENSP00000363001"/>
<dbReference type="GlyCosmos" id="Q92485">
    <property type="glycosylation" value="3 sites, No reported glycans"/>
</dbReference>
<dbReference type="GlyGen" id="Q92485">
    <property type="glycosylation" value="4 sites, 1 N-linked glycan (1 site)"/>
</dbReference>
<dbReference type="iPTMnet" id="Q92485"/>
<dbReference type="PhosphoSitePlus" id="Q92485"/>
<dbReference type="SwissPalm" id="Q92485"/>
<dbReference type="BioMuta" id="SMPDL3B"/>
<dbReference type="DMDM" id="62906890"/>
<dbReference type="jPOST" id="Q92485"/>
<dbReference type="MassIVE" id="Q92485"/>
<dbReference type="PaxDb" id="9606-ENSP00000363001"/>
<dbReference type="PeptideAtlas" id="Q92485"/>
<dbReference type="ProteomicsDB" id="75266">
    <molecule id="Q92485-1"/>
</dbReference>
<dbReference type="ProteomicsDB" id="75267">
    <molecule id="Q92485-2"/>
</dbReference>
<dbReference type="Pumba" id="Q92485"/>
<dbReference type="Antibodypedia" id="30880">
    <property type="antibodies" value="93 antibodies from 19 providers"/>
</dbReference>
<dbReference type="DNASU" id="27293"/>
<dbReference type="Ensembl" id="ENST00000373888.8">
    <molecule id="Q92485-2"/>
    <property type="protein sequence ID" value="ENSP00000362995.4"/>
    <property type="gene ID" value="ENSG00000130768.15"/>
</dbReference>
<dbReference type="Ensembl" id="ENST00000373894.8">
    <molecule id="Q92485-1"/>
    <property type="protein sequence ID" value="ENSP00000363001.3"/>
    <property type="gene ID" value="ENSG00000130768.15"/>
</dbReference>
<dbReference type="GeneID" id="27293"/>
<dbReference type="KEGG" id="hsa:27293"/>
<dbReference type="MANE-Select" id="ENST00000373894.8">
    <property type="protein sequence ID" value="ENSP00000363001.3"/>
    <property type="RefSeq nucleotide sequence ID" value="NM_014474.4"/>
    <property type="RefSeq protein sequence ID" value="NP_055289.2"/>
</dbReference>
<dbReference type="UCSC" id="uc001bpf.4">
    <molecule id="Q92485-1"/>
    <property type="organism name" value="human"/>
</dbReference>
<dbReference type="AGR" id="HGNC:21416"/>
<dbReference type="CTD" id="27293"/>
<dbReference type="DisGeNET" id="27293"/>
<dbReference type="GeneCards" id="SMPDL3B"/>
<dbReference type="HGNC" id="HGNC:21416">
    <property type="gene designation" value="SMPDL3B"/>
</dbReference>
<dbReference type="HPA" id="ENSG00000130768">
    <property type="expression patterns" value="Tissue enhanced (intestine, pancreas)"/>
</dbReference>
<dbReference type="MIM" id="617737">
    <property type="type" value="gene"/>
</dbReference>
<dbReference type="neXtProt" id="NX_Q92485"/>
<dbReference type="OpenTargets" id="ENSG00000130768"/>
<dbReference type="PharmGKB" id="PA134889099"/>
<dbReference type="VEuPathDB" id="HostDB:ENSG00000130768"/>
<dbReference type="eggNOG" id="KOG3770">
    <property type="taxonomic scope" value="Eukaryota"/>
</dbReference>
<dbReference type="GeneTree" id="ENSGT00950000183182"/>
<dbReference type="HOGENOM" id="CLU_014743_0_2_1"/>
<dbReference type="InParanoid" id="Q92485"/>
<dbReference type="OMA" id="GNFWHIT"/>
<dbReference type="OrthoDB" id="348678at2759"/>
<dbReference type="PAN-GO" id="Q92485">
    <property type="GO annotations" value="2 GO annotations based on evolutionary models"/>
</dbReference>
<dbReference type="PhylomeDB" id="Q92485"/>
<dbReference type="TreeFam" id="TF313674"/>
<dbReference type="PathwayCommons" id="Q92485"/>
<dbReference type="SignaLink" id="Q92485"/>
<dbReference type="BioGRID-ORCS" id="27293">
    <property type="hits" value="20 hits in 1153 CRISPR screens"/>
</dbReference>
<dbReference type="ChiTaRS" id="SMPDL3B">
    <property type="organism name" value="human"/>
</dbReference>
<dbReference type="GenomeRNAi" id="27293"/>
<dbReference type="Pharos" id="Q92485">
    <property type="development level" value="Tbio"/>
</dbReference>
<dbReference type="PRO" id="PR:Q92485"/>
<dbReference type="Proteomes" id="UP000005640">
    <property type="component" value="Chromosome 1"/>
</dbReference>
<dbReference type="RNAct" id="Q92485">
    <property type="molecule type" value="protein"/>
</dbReference>
<dbReference type="Bgee" id="ENSG00000130768">
    <property type="expression patterns" value="Expressed in mucosa of transverse colon and 112 other cell types or tissues"/>
</dbReference>
<dbReference type="ExpressionAtlas" id="Q92485">
    <property type="expression patterns" value="baseline and differential"/>
</dbReference>
<dbReference type="GO" id="GO:0070062">
    <property type="term" value="C:extracellular exosome"/>
    <property type="evidence" value="ECO:0007005"/>
    <property type="project" value="UniProtKB"/>
</dbReference>
<dbReference type="GO" id="GO:0005615">
    <property type="term" value="C:extracellular space"/>
    <property type="evidence" value="ECO:0007005"/>
    <property type="project" value="UniProtKB"/>
</dbReference>
<dbReference type="GO" id="GO:0005886">
    <property type="term" value="C:plasma membrane"/>
    <property type="evidence" value="ECO:0000250"/>
    <property type="project" value="UniProtKB"/>
</dbReference>
<dbReference type="GO" id="GO:0098552">
    <property type="term" value="C:side of membrane"/>
    <property type="evidence" value="ECO:0007669"/>
    <property type="project" value="UniProtKB-KW"/>
</dbReference>
<dbReference type="GO" id="GO:0016798">
    <property type="term" value="F:hydrolase activity, acting on glycosyl bonds"/>
    <property type="evidence" value="ECO:0007669"/>
    <property type="project" value="UniProtKB-KW"/>
</dbReference>
<dbReference type="GO" id="GO:0008081">
    <property type="term" value="F:phosphoric diester hydrolase activity"/>
    <property type="evidence" value="ECO:0000315"/>
    <property type="project" value="UniProtKB"/>
</dbReference>
<dbReference type="GO" id="GO:0004767">
    <property type="term" value="F:sphingomyelin phosphodiesterase activity"/>
    <property type="evidence" value="ECO:0007669"/>
    <property type="project" value="InterPro"/>
</dbReference>
<dbReference type="GO" id="GO:0008270">
    <property type="term" value="F:zinc ion binding"/>
    <property type="evidence" value="ECO:0000250"/>
    <property type="project" value="UniProtKB"/>
</dbReference>
<dbReference type="GO" id="GO:0006954">
    <property type="term" value="P:inflammatory response"/>
    <property type="evidence" value="ECO:0007669"/>
    <property type="project" value="UniProtKB-KW"/>
</dbReference>
<dbReference type="GO" id="GO:0045087">
    <property type="term" value="P:innate immune response"/>
    <property type="evidence" value="ECO:0007669"/>
    <property type="project" value="UniProtKB-KW"/>
</dbReference>
<dbReference type="GO" id="GO:0046466">
    <property type="term" value="P:membrane lipid catabolic process"/>
    <property type="evidence" value="ECO:0000250"/>
    <property type="project" value="UniProtKB"/>
</dbReference>
<dbReference type="GO" id="GO:0050728">
    <property type="term" value="P:negative regulation of inflammatory response"/>
    <property type="evidence" value="ECO:0000250"/>
    <property type="project" value="UniProtKB"/>
</dbReference>
<dbReference type="GO" id="GO:0034122">
    <property type="term" value="P:negative regulation of toll-like receptor signaling pathway"/>
    <property type="evidence" value="ECO:0000250"/>
    <property type="project" value="UniProtKB"/>
</dbReference>
<dbReference type="GO" id="GO:0006685">
    <property type="term" value="P:sphingomyelin catabolic process"/>
    <property type="evidence" value="ECO:0007669"/>
    <property type="project" value="InterPro"/>
</dbReference>
<dbReference type="CDD" id="cd00842">
    <property type="entry name" value="MPP_ASMase"/>
    <property type="match status" value="1"/>
</dbReference>
<dbReference type="FunFam" id="3.60.21.10:FF:000057">
    <property type="entry name" value="Acid sphingomyelinase-like phosphodiesterase"/>
    <property type="match status" value="1"/>
</dbReference>
<dbReference type="Gene3D" id="3.60.21.10">
    <property type="match status" value="1"/>
</dbReference>
<dbReference type="InterPro" id="IPR017064">
    <property type="entry name" value="ASM-like_Pdiesterase_prd"/>
</dbReference>
<dbReference type="InterPro" id="IPR045473">
    <property type="entry name" value="ASM_C"/>
</dbReference>
<dbReference type="InterPro" id="IPR041805">
    <property type="entry name" value="ASMase/PPN1_MPP"/>
</dbReference>
<dbReference type="InterPro" id="IPR004843">
    <property type="entry name" value="Calcineurin-like_PHP_ApaH"/>
</dbReference>
<dbReference type="InterPro" id="IPR029052">
    <property type="entry name" value="Metallo-depent_PP-like"/>
</dbReference>
<dbReference type="PANTHER" id="PTHR10340:SF25">
    <property type="entry name" value="ACID SPHINGOMYELINASE-LIKE PHOSPHODIESTERASE 3B"/>
    <property type="match status" value="1"/>
</dbReference>
<dbReference type="PANTHER" id="PTHR10340">
    <property type="entry name" value="SPHINGOMYELIN PHOSPHODIESTERASE"/>
    <property type="match status" value="1"/>
</dbReference>
<dbReference type="Pfam" id="PF19272">
    <property type="entry name" value="ASMase_C"/>
    <property type="match status" value="1"/>
</dbReference>
<dbReference type="Pfam" id="PF00149">
    <property type="entry name" value="Metallophos"/>
    <property type="match status" value="1"/>
</dbReference>
<dbReference type="PIRSF" id="PIRSF036767">
    <property type="entry name" value="ASM-like_PDE"/>
    <property type="match status" value="1"/>
</dbReference>
<dbReference type="SUPFAM" id="SSF56300">
    <property type="entry name" value="Metallo-dependent phosphatases"/>
    <property type="match status" value="1"/>
</dbReference>
<organism>
    <name type="scientific">Homo sapiens</name>
    <name type="common">Human</name>
    <dbReference type="NCBI Taxonomy" id="9606"/>
    <lineage>
        <taxon>Eukaryota</taxon>
        <taxon>Metazoa</taxon>
        <taxon>Chordata</taxon>
        <taxon>Craniata</taxon>
        <taxon>Vertebrata</taxon>
        <taxon>Euteleostomi</taxon>
        <taxon>Mammalia</taxon>
        <taxon>Eutheria</taxon>
        <taxon>Euarchontoglires</taxon>
        <taxon>Primates</taxon>
        <taxon>Haplorrhini</taxon>
        <taxon>Catarrhini</taxon>
        <taxon>Hominidae</taxon>
        <taxon>Homo</taxon>
    </lineage>
</organism>
<comment type="function">
    <text evidence="2 4">Lipid-modulating phosphodiesterase (PubMed:26095358). Active on the surface of macrophages and dendritic cells and strongly influences macrophage lipid composition and membrane fluidity. Acts as a negative regulator of Toll-like receptor signaling (By similarity). Has in vitro phosphodiesterase activity, but the physiological substrate is unknown (PubMed:26095358). Lacks activity with phosphocholine-containing lipids, but can cleave CDP-choline, and can release phosphate from ATP and ADP (in vitro) (By similarity).</text>
</comment>
<comment type="cofactor">
    <cofactor evidence="2">
        <name>Zn(2+)</name>
        <dbReference type="ChEBI" id="CHEBI:29105"/>
    </cofactor>
    <text evidence="2">Binds 2 Zn(2+) ions per subunit.</text>
</comment>
<comment type="subunit">
    <text evidence="2">Interacts with TLR4, TLR7, TLR8 and TLR9.</text>
</comment>
<comment type="interaction">
    <interactant intactId="EBI-21501656">
        <id>Q92485-2</id>
    </interactant>
    <interactant intactId="EBI-15558981">
        <id>P06213-1</id>
        <label>INSR</label>
    </interactant>
    <organismsDiffer>false</organismsDiffer>
    <experiments>2</experiments>
</comment>
<comment type="interaction">
    <interactant intactId="EBI-21501656">
        <id>Q92485-2</id>
    </interactant>
    <interactant intactId="EBI-9984921">
        <id>P06213-2</id>
        <label>INSR</label>
    </interactant>
    <organismsDiffer>false</organismsDiffer>
    <experiments>2</experiments>
</comment>
<comment type="subcellular location">
    <subcellularLocation>
        <location evidence="1">Secreted</location>
    </subcellularLocation>
    <subcellularLocation>
        <location evidence="2">Cell membrane</location>
        <topology evidence="2">Lipid-anchor</topology>
        <topology evidence="2">GPI-anchor</topology>
    </subcellularLocation>
</comment>
<comment type="alternative products">
    <event type="alternative splicing"/>
    <isoform>
        <id>Q92485-1</id>
        <name>1</name>
        <sequence type="displayed"/>
    </isoform>
    <isoform>
        <id>Q92485-2</id>
        <name>2</name>
        <sequence type="described" ref="VSP_013478 VSP_013479"/>
    </isoform>
</comment>
<comment type="PTM">
    <text evidence="4">N-glycosylated.</text>
</comment>
<comment type="similarity">
    <text evidence="6">Belongs to the acid sphingomyelinase family.</text>
</comment>